<reference key="1">
    <citation type="journal article" date="2007" name="PLoS Genet.">
        <title>Patterns and implications of gene gain and loss in the evolution of Prochlorococcus.</title>
        <authorList>
            <person name="Kettler G.C."/>
            <person name="Martiny A.C."/>
            <person name="Huang K."/>
            <person name="Zucker J."/>
            <person name="Coleman M.L."/>
            <person name="Rodrigue S."/>
            <person name="Chen F."/>
            <person name="Lapidus A."/>
            <person name="Ferriera S."/>
            <person name="Johnson J."/>
            <person name="Steglich C."/>
            <person name="Church G.M."/>
            <person name="Richardson P."/>
            <person name="Chisholm S.W."/>
        </authorList>
    </citation>
    <scope>NUCLEOTIDE SEQUENCE [LARGE SCALE GENOMIC DNA]</scope>
    <source>
        <strain>AS9601</strain>
    </source>
</reference>
<keyword id="KW-0240">DNA-directed RNA polymerase</keyword>
<keyword id="KW-0548">Nucleotidyltransferase</keyword>
<keyword id="KW-0804">Transcription</keyword>
<keyword id="KW-0808">Transferase</keyword>
<organism>
    <name type="scientific">Prochlorococcus marinus (strain AS9601)</name>
    <dbReference type="NCBI Taxonomy" id="146891"/>
    <lineage>
        <taxon>Bacteria</taxon>
        <taxon>Bacillati</taxon>
        <taxon>Cyanobacteriota</taxon>
        <taxon>Cyanophyceae</taxon>
        <taxon>Synechococcales</taxon>
        <taxon>Prochlorococcaceae</taxon>
        <taxon>Prochlorococcus</taxon>
    </lineage>
</organism>
<dbReference type="EC" id="2.7.7.6" evidence="1"/>
<dbReference type="EMBL" id="CP000551">
    <property type="protein sequence ID" value="ABM71026.1"/>
    <property type="molecule type" value="Genomic_DNA"/>
</dbReference>
<dbReference type="RefSeq" id="WP_041484570.1">
    <property type="nucleotide sequence ID" value="NC_008816.1"/>
</dbReference>
<dbReference type="SMR" id="A2BTB5"/>
<dbReference type="STRING" id="146891.A9601_17431"/>
<dbReference type="KEGG" id="pmb:A9601_17431"/>
<dbReference type="eggNOG" id="COG0202">
    <property type="taxonomic scope" value="Bacteria"/>
</dbReference>
<dbReference type="HOGENOM" id="CLU_053084_0_1_3"/>
<dbReference type="OrthoDB" id="9805706at2"/>
<dbReference type="Proteomes" id="UP000002590">
    <property type="component" value="Chromosome"/>
</dbReference>
<dbReference type="GO" id="GO:0005737">
    <property type="term" value="C:cytoplasm"/>
    <property type="evidence" value="ECO:0007669"/>
    <property type="project" value="UniProtKB-ARBA"/>
</dbReference>
<dbReference type="GO" id="GO:0000428">
    <property type="term" value="C:DNA-directed RNA polymerase complex"/>
    <property type="evidence" value="ECO:0007669"/>
    <property type="project" value="UniProtKB-KW"/>
</dbReference>
<dbReference type="GO" id="GO:0003677">
    <property type="term" value="F:DNA binding"/>
    <property type="evidence" value="ECO:0007669"/>
    <property type="project" value="UniProtKB-UniRule"/>
</dbReference>
<dbReference type="GO" id="GO:0003899">
    <property type="term" value="F:DNA-directed RNA polymerase activity"/>
    <property type="evidence" value="ECO:0007669"/>
    <property type="project" value="UniProtKB-UniRule"/>
</dbReference>
<dbReference type="GO" id="GO:0046983">
    <property type="term" value="F:protein dimerization activity"/>
    <property type="evidence" value="ECO:0007669"/>
    <property type="project" value="InterPro"/>
</dbReference>
<dbReference type="GO" id="GO:0006351">
    <property type="term" value="P:DNA-templated transcription"/>
    <property type="evidence" value="ECO:0007669"/>
    <property type="project" value="UniProtKB-UniRule"/>
</dbReference>
<dbReference type="CDD" id="cd06928">
    <property type="entry name" value="RNAP_alpha_NTD"/>
    <property type="match status" value="1"/>
</dbReference>
<dbReference type="FunFam" id="2.170.120.12:FF:000001">
    <property type="entry name" value="DNA-directed RNA polymerase subunit alpha"/>
    <property type="match status" value="1"/>
</dbReference>
<dbReference type="Gene3D" id="1.10.150.20">
    <property type="entry name" value="5' to 3' exonuclease, C-terminal subdomain"/>
    <property type="match status" value="1"/>
</dbReference>
<dbReference type="Gene3D" id="2.170.120.12">
    <property type="entry name" value="DNA-directed RNA polymerase, insert domain"/>
    <property type="match status" value="1"/>
</dbReference>
<dbReference type="Gene3D" id="3.30.1360.10">
    <property type="entry name" value="RNA polymerase, RBP11-like subunit"/>
    <property type="match status" value="1"/>
</dbReference>
<dbReference type="HAMAP" id="MF_00059">
    <property type="entry name" value="RNApol_bact_RpoA"/>
    <property type="match status" value="1"/>
</dbReference>
<dbReference type="InterPro" id="IPR011262">
    <property type="entry name" value="DNA-dir_RNA_pol_insert"/>
</dbReference>
<dbReference type="InterPro" id="IPR011263">
    <property type="entry name" value="DNA-dir_RNA_pol_RpoA/D/Rpb3"/>
</dbReference>
<dbReference type="InterPro" id="IPR011773">
    <property type="entry name" value="DNA-dir_RpoA"/>
</dbReference>
<dbReference type="InterPro" id="IPR036603">
    <property type="entry name" value="RBP11-like"/>
</dbReference>
<dbReference type="InterPro" id="IPR011260">
    <property type="entry name" value="RNAP_asu_C"/>
</dbReference>
<dbReference type="InterPro" id="IPR036643">
    <property type="entry name" value="RNApol_insert_sf"/>
</dbReference>
<dbReference type="NCBIfam" id="NF003516">
    <property type="entry name" value="PRK05182.2-2"/>
    <property type="match status" value="1"/>
</dbReference>
<dbReference type="NCBIfam" id="NF003519">
    <property type="entry name" value="PRK05182.2-5"/>
    <property type="match status" value="1"/>
</dbReference>
<dbReference type="NCBIfam" id="TIGR02027">
    <property type="entry name" value="rpoA"/>
    <property type="match status" value="1"/>
</dbReference>
<dbReference type="Pfam" id="PF01000">
    <property type="entry name" value="RNA_pol_A_bac"/>
    <property type="match status" value="1"/>
</dbReference>
<dbReference type="Pfam" id="PF03118">
    <property type="entry name" value="RNA_pol_A_CTD"/>
    <property type="match status" value="1"/>
</dbReference>
<dbReference type="Pfam" id="PF01193">
    <property type="entry name" value="RNA_pol_L"/>
    <property type="match status" value="1"/>
</dbReference>
<dbReference type="SMART" id="SM00662">
    <property type="entry name" value="RPOLD"/>
    <property type="match status" value="1"/>
</dbReference>
<dbReference type="SUPFAM" id="SSF47789">
    <property type="entry name" value="C-terminal domain of RNA polymerase alpha subunit"/>
    <property type="match status" value="1"/>
</dbReference>
<dbReference type="SUPFAM" id="SSF56553">
    <property type="entry name" value="Insert subdomain of RNA polymerase alpha subunit"/>
    <property type="match status" value="1"/>
</dbReference>
<dbReference type="SUPFAM" id="SSF55257">
    <property type="entry name" value="RBP11-like subunits of RNA polymerase"/>
    <property type="match status" value="1"/>
</dbReference>
<accession>A2BTB5</accession>
<feature type="chain" id="PRO_0000296850" description="DNA-directed RNA polymerase subunit alpha">
    <location>
        <begin position="1"/>
        <end position="312"/>
    </location>
</feature>
<feature type="region of interest" description="Alpha N-terminal domain (alpha-NTD)" evidence="1">
    <location>
        <begin position="1"/>
        <end position="229"/>
    </location>
</feature>
<feature type="region of interest" description="Alpha C-terminal domain (alpha-CTD)" evidence="1">
    <location>
        <begin position="240"/>
        <end position="312"/>
    </location>
</feature>
<evidence type="ECO:0000255" key="1">
    <source>
        <dbReference type="HAMAP-Rule" id="MF_00059"/>
    </source>
</evidence>
<gene>
    <name evidence="1" type="primary">rpoA</name>
    <name type="ordered locus">A9601_17431</name>
</gene>
<sequence length="312" mass="34180">MLQYQIDRIDHQIADDRSQTGTFLIGPLERGQATTLGNSLRRVLMGGLEGSAVTAVRIAGINHEYATIPGVREDVLDILLNCKQLSINSSNPELEIGRLVASGPMEVKANDIQFSSQVEIVDGEKPIATIQEGHNLELEIHVERGVGYRPVDRKSEETTAIDLLQIDAVFMPVKRVNFTIDETAVAEGATGRERLKMEVVTDGSTSPDDAIAEAANQLIELFQPLATVTMVEEIPEEPEPSPEAQIPLEELNLSVRAYNCLKRAQVNSVSDLMGFSYEDLLEIKNFGSKSADEVIEALERIGISIPQSRTSV</sequence>
<name>RPOA_PROMS</name>
<protein>
    <recommendedName>
        <fullName evidence="1">DNA-directed RNA polymerase subunit alpha</fullName>
        <shortName evidence="1">RNAP subunit alpha</shortName>
        <ecNumber evidence="1">2.7.7.6</ecNumber>
    </recommendedName>
    <alternativeName>
        <fullName evidence="1">RNA polymerase subunit alpha</fullName>
    </alternativeName>
    <alternativeName>
        <fullName evidence="1">Transcriptase subunit alpha</fullName>
    </alternativeName>
</protein>
<comment type="function">
    <text evidence="1">DNA-dependent RNA polymerase catalyzes the transcription of DNA into RNA using the four ribonucleoside triphosphates as substrates.</text>
</comment>
<comment type="catalytic activity">
    <reaction evidence="1">
        <text>RNA(n) + a ribonucleoside 5'-triphosphate = RNA(n+1) + diphosphate</text>
        <dbReference type="Rhea" id="RHEA:21248"/>
        <dbReference type="Rhea" id="RHEA-COMP:14527"/>
        <dbReference type="Rhea" id="RHEA-COMP:17342"/>
        <dbReference type="ChEBI" id="CHEBI:33019"/>
        <dbReference type="ChEBI" id="CHEBI:61557"/>
        <dbReference type="ChEBI" id="CHEBI:140395"/>
        <dbReference type="EC" id="2.7.7.6"/>
    </reaction>
</comment>
<comment type="subunit">
    <text evidence="1">In cyanobacteria the RNAP catalytic core is composed of 2 alpha, 1 beta, 1 beta', 1 gamma and 1 omega subunit. When a sigma factor is associated with the core the holoenzyme is formed, which can initiate transcription.</text>
</comment>
<comment type="domain">
    <text evidence="1">The N-terminal domain is essential for RNAP assembly and basal transcription, whereas the C-terminal domain is involved in interaction with transcriptional regulators and with upstream promoter elements.</text>
</comment>
<comment type="similarity">
    <text evidence="1">Belongs to the RNA polymerase alpha chain family.</text>
</comment>
<proteinExistence type="inferred from homology"/>